<keyword id="KW-1003">Cell membrane</keyword>
<keyword id="KW-0449">Lipoprotein</keyword>
<keyword id="KW-0472">Membrane</keyword>
<keyword id="KW-0564">Palmitate</keyword>
<keyword id="KW-1185">Reference proteome</keyword>
<keyword id="KW-0732">Signal</keyword>
<feature type="signal peptide" evidence="1">
    <location>
        <begin position="1"/>
        <end position="32"/>
    </location>
</feature>
<feature type="chain" id="PRO_0000253347" description="Uncharacterized lipoprotein SCO2278">
    <location>
        <begin position="33"/>
        <end position="329"/>
    </location>
</feature>
<feature type="lipid moiety-binding region" description="N-palmitoyl cysteine" evidence="1">
    <location>
        <position position="33"/>
    </location>
</feature>
<feature type="lipid moiety-binding region" description="S-diacylglycerol cysteine" evidence="1">
    <location>
        <position position="33"/>
    </location>
</feature>
<proteinExistence type="inferred from homology"/>
<accession>Q9RKQ0</accession>
<gene>
    <name type="ordered locus">SCO2278</name>
    <name type="ORF">SCC75A.24</name>
</gene>
<comment type="subcellular location">
    <subcellularLocation>
        <location evidence="1">Cell membrane</location>
        <topology evidence="1">Lipid-anchor</topology>
    </subcellularLocation>
</comment>
<comment type="sequence caution" evidence="2">
    <conflict type="erroneous initiation">
        <sequence resource="EMBL-CDS" id="CAB61724"/>
    </conflict>
</comment>
<name>Y2278_STRCO</name>
<organism>
    <name type="scientific">Streptomyces coelicolor (strain ATCC BAA-471 / A3(2) / M145)</name>
    <dbReference type="NCBI Taxonomy" id="100226"/>
    <lineage>
        <taxon>Bacteria</taxon>
        <taxon>Bacillati</taxon>
        <taxon>Actinomycetota</taxon>
        <taxon>Actinomycetes</taxon>
        <taxon>Kitasatosporales</taxon>
        <taxon>Streptomycetaceae</taxon>
        <taxon>Streptomyces</taxon>
        <taxon>Streptomyces albidoflavus group</taxon>
    </lineage>
</organism>
<sequence length="329" mass="35281">MSQDRGPRRPRRLEKCALISASATVLSLTASGCVVVHGEREVLPSATRAEAAKALERFTTAYNKADKAYDASLDADHTTGALAAIDSARLKAGAANHPDGNPAHEPLELTDAKFTIPKKAGWPRWFVADTKANKGGTARWLLVFTRDGLEETWEAAYLTLVAPGKVPEFKTDQDGWAEAVPANATDVSVPPAGLSKDYTTYLQDGGKTFADGVHTSSWRALREKRSTRPGLVTQYIDEPLTNGDYAPLALRTEDGGALVFFTSRHFEKQTAARGTSVPTPNKDVLALTDGEIKQSLTMEFVSNEVALDPADGQVSVLGRVQGLTSGKGE</sequence>
<reference key="1">
    <citation type="journal article" date="2002" name="Nature">
        <title>Complete genome sequence of the model actinomycete Streptomyces coelicolor A3(2).</title>
        <authorList>
            <person name="Bentley S.D."/>
            <person name="Chater K.F."/>
            <person name="Cerdeno-Tarraga A.-M."/>
            <person name="Challis G.L."/>
            <person name="Thomson N.R."/>
            <person name="James K.D."/>
            <person name="Harris D.E."/>
            <person name="Quail M.A."/>
            <person name="Kieser H."/>
            <person name="Harper D."/>
            <person name="Bateman A."/>
            <person name="Brown S."/>
            <person name="Chandra G."/>
            <person name="Chen C.W."/>
            <person name="Collins M."/>
            <person name="Cronin A."/>
            <person name="Fraser A."/>
            <person name="Goble A."/>
            <person name="Hidalgo J."/>
            <person name="Hornsby T."/>
            <person name="Howarth S."/>
            <person name="Huang C.-H."/>
            <person name="Kieser T."/>
            <person name="Larke L."/>
            <person name="Murphy L.D."/>
            <person name="Oliver K."/>
            <person name="O'Neil S."/>
            <person name="Rabbinowitsch E."/>
            <person name="Rajandream M.A."/>
            <person name="Rutherford K.M."/>
            <person name="Rutter S."/>
            <person name="Seeger K."/>
            <person name="Saunders D."/>
            <person name="Sharp S."/>
            <person name="Squares R."/>
            <person name="Squares S."/>
            <person name="Taylor K."/>
            <person name="Warren T."/>
            <person name="Wietzorrek A."/>
            <person name="Woodward J.R."/>
            <person name="Barrell B.G."/>
            <person name="Parkhill J."/>
            <person name="Hopwood D.A."/>
        </authorList>
    </citation>
    <scope>NUCLEOTIDE SEQUENCE [LARGE SCALE GENOMIC DNA]</scope>
    <source>
        <strain>ATCC BAA-471 / A3(2) / M145</strain>
    </source>
</reference>
<dbReference type="EMBL" id="AL939112">
    <property type="protein sequence ID" value="CAB61724.1"/>
    <property type="status" value="ALT_INIT"/>
    <property type="molecule type" value="Genomic_DNA"/>
</dbReference>
<dbReference type="PIR" id="T50587">
    <property type="entry name" value="T50587"/>
</dbReference>
<dbReference type="RefSeq" id="NP_626526.1">
    <property type="nucleotide sequence ID" value="NC_003888.3"/>
</dbReference>
<dbReference type="STRING" id="100226.gene:17759875"/>
<dbReference type="PaxDb" id="100226-SCO2278"/>
<dbReference type="KEGG" id="sco:SCO2278"/>
<dbReference type="PATRIC" id="fig|100226.15.peg.2315"/>
<dbReference type="HOGENOM" id="CLU_067337_0_0_11"/>
<dbReference type="InParanoid" id="Q9RKQ0"/>
<dbReference type="OrthoDB" id="3510378at2"/>
<dbReference type="Proteomes" id="UP000001973">
    <property type="component" value="Chromosome"/>
</dbReference>
<dbReference type="GO" id="GO:0005886">
    <property type="term" value="C:plasma membrane"/>
    <property type="evidence" value="ECO:0007669"/>
    <property type="project" value="UniProtKB-SubCell"/>
</dbReference>
<dbReference type="PROSITE" id="PS51257">
    <property type="entry name" value="PROKAR_LIPOPROTEIN"/>
    <property type="match status" value="1"/>
</dbReference>
<protein>
    <recommendedName>
        <fullName>Uncharacterized lipoprotein SCO2278</fullName>
    </recommendedName>
</protein>
<evidence type="ECO:0000255" key="1">
    <source>
        <dbReference type="PROSITE-ProRule" id="PRU00303"/>
    </source>
</evidence>
<evidence type="ECO:0000305" key="2"/>